<proteinExistence type="inferred from homology"/>
<gene>
    <name evidence="2" type="primary">hjc</name>
    <name type="ordered locus">TK1175</name>
</gene>
<comment type="function">
    <text evidence="2">A structure-specific endonuclease that resolves Holliday junction (HJ) intermediates during genetic recombination. Cleaves 4-way DNA junctions introducing paired nicks in opposing strands, leaving a 5'-terminal phosphate and a 3'-terminal hydroxyl group that are subsequently ligated to produce recombinant products.</text>
</comment>
<comment type="catalytic activity">
    <reaction evidence="2">
        <text>Endonucleolytic cleavage at a junction such as a reciprocal single-stranded crossover between two homologous DNA duplexes (Holliday junction).</text>
        <dbReference type="EC" id="3.1.21.10"/>
    </reaction>
</comment>
<comment type="cofactor">
    <cofactor evidence="2">
        <name>Mg(2+)</name>
        <dbReference type="ChEBI" id="CHEBI:18420"/>
    </cofactor>
    <text evidence="2">Binds 1 Mg(2+) ion per subunit.</text>
</comment>
<comment type="subunit">
    <text evidence="2">Homodimer.</text>
</comment>
<comment type="disruption phenotype">
    <text evidence="3">Not essential, it can be disrupted. Cell survival is unaffected by several DNA damaging agents.</text>
</comment>
<comment type="similarity">
    <text evidence="2">Belongs to the Holliday junction resolvase Hjc family.</text>
</comment>
<accession>Q5JGD9</accession>
<feature type="chain" id="PRO_0000429161" description="Crossover junction endodeoxyribonuclease Hjc">
    <location>
        <begin position="1"/>
        <end position="128"/>
    </location>
</feature>
<feature type="active site" evidence="2">
    <location>
        <position position="30"/>
    </location>
</feature>
<feature type="binding site" evidence="2">
    <location>
        <position position="10"/>
    </location>
    <ligand>
        <name>Mg(2+)</name>
        <dbReference type="ChEBI" id="CHEBI:18420"/>
    </ligand>
</feature>
<feature type="binding site" evidence="2">
    <location>
        <position position="34"/>
    </location>
    <ligand>
        <name>Mg(2+)</name>
        <dbReference type="ChEBI" id="CHEBI:18420"/>
    </ligand>
</feature>
<feature type="binding site" evidence="2">
    <location>
        <position position="47"/>
    </location>
    <ligand>
        <name>Mg(2+)</name>
        <dbReference type="ChEBI" id="CHEBI:18420"/>
    </ligand>
</feature>
<feature type="site" description="Transition state stabilizer" evidence="1">
    <location>
        <position position="49"/>
    </location>
</feature>
<reference key="1">
    <citation type="journal article" date="2005" name="Genome Res.">
        <title>Complete genome sequence of the hyperthermophilic archaeon Thermococcus kodakaraensis KOD1 and comparison with Pyrococcus genomes.</title>
        <authorList>
            <person name="Fukui T."/>
            <person name="Atomi H."/>
            <person name="Kanai T."/>
            <person name="Matsumi R."/>
            <person name="Fujiwara S."/>
            <person name="Imanaka T."/>
        </authorList>
    </citation>
    <scope>NUCLEOTIDE SEQUENCE [LARGE SCALE GENOMIC DNA]</scope>
    <source>
        <strain>ATCC BAA-918 / JCM 12380 / KOD1</strain>
    </source>
</reference>
<reference key="2">
    <citation type="journal article" date="2010" name="Genes Genet. Syst.">
        <title>Genetic analysis of DNA repair in the hyperthermophilic archaeon, Thermococcus kodakaraensis.</title>
        <authorList>
            <person name="Fujikane R."/>
            <person name="Ishino S."/>
            <person name="Ishino Y."/>
            <person name="Forterre P."/>
        </authorList>
    </citation>
    <scope>DISRUPTION PHENOTYPE</scope>
    <source>
        <strain>ATCC BAA-918 / JCM 12380 / KOD1</strain>
    </source>
</reference>
<keyword id="KW-0227">DNA damage</keyword>
<keyword id="KW-0233">DNA recombination</keyword>
<keyword id="KW-0234">DNA repair</keyword>
<keyword id="KW-0238">DNA-binding</keyword>
<keyword id="KW-0255">Endonuclease</keyword>
<keyword id="KW-0378">Hydrolase</keyword>
<keyword id="KW-0460">Magnesium</keyword>
<keyword id="KW-0479">Metal-binding</keyword>
<keyword id="KW-0540">Nuclease</keyword>
<keyword id="KW-1185">Reference proteome</keyword>
<organism>
    <name type="scientific">Thermococcus kodakarensis (strain ATCC BAA-918 / JCM 12380 / KOD1)</name>
    <name type="common">Pyrococcus kodakaraensis (strain KOD1)</name>
    <dbReference type="NCBI Taxonomy" id="69014"/>
    <lineage>
        <taxon>Archaea</taxon>
        <taxon>Methanobacteriati</taxon>
        <taxon>Methanobacteriota</taxon>
        <taxon>Thermococci</taxon>
        <taxon>Thermococcales</taxon>
        <taxon>Thermococcaceae</taxon>
        <taxon>Thermococcus</taxon>
    </lineage>
</organism>
<dbReference type="EC" id="3.1.21.10" evidence="2"/>
<dbReference type="EMBL" id="AP006878">
    <property type="protein sequence ID" value="BAD85364.1"/>
    <property type="molecule type" value="Genomic_DNA"/>
</dbReference>
<dbReference type="RefSeq" id="WP_011250126.1">
    <property type="nucleotide sequence ID" value="NC_006624.1"/>
</dbReference>
<dbReference type="SMR" id="Q5JGD9"/>
<dbReference type="STRING" id="69014.TK1175"/>
<dbReference type="EnsemblBacteria" id="BAD85364">
    <property type="protein sequence ID" value="BAD85364"/>
    <property type="gene ID" value="TK1175"/>
</dbReference>
<dbReference type="GeneID" id="78447690"/>
<dbReference type="KEGG" id="tko:TK1175"/>
<dbReference type="PATRIC" id="fig|69014.16.peg.1150"/>
<dbReference type="eggNOG" id="arCOG00919">
    <property type="taxonomic scope" value="Archaea"/>
</dbReference>
<dbReference type="HOGENOM" id="CLU_139546_2_0_2"/>
<dbReference type="InParanoid" id="Q5JGD9"/>
<dbReference type="OrthoDB" id="34330at2157"/>
<dbReference type="PhylomeDB" id="Q5JGD9"/>
<dbReference type="Proteomes" id="UP000000536">
    <property type="component" value="Chromosome"/>
</dbReference>
<dbReference type="GO" id="GO:0008821">
    <property type="term" value="F:crossover junction DNA endonuclease activity"/>
    <property type="evidence" value="ECO:0007669"/>
    <property type="project" value="UniProtKB-UniRule"/>
</dbReference>
<dbReference type="GO" id="GO:0003677">
    <property type="term" value="F:DNA binding"/>
    <property type="evidence" value="ECO:0007669"/>
    <property type="project" value="UniProtKB-KW"/>
</dbReference>
<dbReference type="GO" id="GO:0000287">
    <property type="term" value="F:magnesium ion binding"/>
    <property type="evidence" value="ECO:0007669"/>
    <property type="project" value="UniProtKB-UniRule"/>
</dbReference>
<dbReference type="GO" id="GO:0006310">
    <property type="term" value="P:DNA recombination"/>
    <property type="evidence" value="ECO:0007669"/>
    <property type="project" value="UniProtKB-UniRule"/>
</dbReference>
<dbReference type="GO" id="GO:0006281">
    <property type="term" value="P:DNA repair"/>
    <property type="evidence" value="ECO:0007669"/>
    <property type="project" value="UniProtKB-UniRule"/>
</dbReference>
<dbReference type="CDD" id="cd00523">
    <property type="entry name" value="Holliday_junction_resolvase"/>
    <property type="match status" value="1"/>
</dbReference>
<dbReference type="Gene3D" id="3.40.1350.10">
    <property type="match status" value="1"/>
</dbReference>
<dbReference type="HAMAP" id="MF_01490">
    <property type="entry name" value="HJ_Resolv_Hjc"/>
    <property type="match status" value="1"/>
</dbReference>
<dbReference type="InterPro" id="IPR002732">
    <property type="entry name" value="Hjc"/>
</dbReference>
<dbReference type="InterPro" id="IPR014428">
    <property type="entry name" value="Hjc_arc"/>
</dbReference>
<dbReference type="InterPro" id="IPR011335">
    <property type="entry name" value="Restrct_endonuc-II-like"/>
</dbReference>
<dbReference type="InterPro" id="IPR011856">
    <property type="entry name" value="tRNA_endonuc-like_dom_sf"/>
</dbReference>
<dbReference type="NCBIfam" id="NF040854">
    <property type="entry name" value="Hol_resolv_Hjc"/>
    <property type="match status" value="1"/>
</dbReference>
<dbReference type="PANTHER" id="PTHR39651">
    <property type="entry name" value="HOLLIDAY JUNCTION RESOLVASE HJC"/>
    <property type="match status" value="1"/>
</dbReference>
<dbReference type="PANTHER" id="PTHR39651:SF1">
    <property type="entry name" value="HOLLIDAY JUNCTION RESOLVASE HJC"/>
    <property type="match status" value="1"/>
</dbReference>
<dbReference type="Pfam" id="PF01870">
    <property type="entry name" value="Hjc"/>
    <property type="match status" value="1"/>
</dbReference>
<dbReference type="PIRSF" id="PIRSF004985">
    <property type="entry name" value="Hlld_jn_rslvs_ar"/>
    <property type="match status" value="1"/>
</dbReference>
<dbReference type="SUPFAM" id="SSF52980">
    <property type="entry name" value="Restriction endonuclease-like"/>
    <property type="match status" value="1"/>
</dbReference>
<sequence length="128" mass="14473">MRYRRGASAERELVKLLESKGFAVLRSAGSHKIDLVAGNGKEYLCIEVKSTRSRKLYLPIEDVEKLVEFAGRFGGRPVLAVKFVNVGWRFYGPNRLEHGEKSYKIDLETPFMTLDGLLGKQRTLEGVL</sequence>
<protein>
    <recommendedName>
        <fullName evidence="2">Crossover junction endodeoxyribonuclease Hjc</fullName>
        <shortName evidence="2">Hjc</shortName>
        <ecNumber evidence="2">3.1.21.10</ecNumber>
    </recommendedName>
    <alternativeName>
        <fullName evidence="2">Holliday junction resolvase Hjc</fullName>
    </alternativeName>
</protein>
<name>HJC_THEKO</name>
<evidence type="ECO:0000255" key="1"/>
<evidence type="ECO:0000255" key="2">
    <source>
        <dbReference type="HAMAP-Rule" id="MF_01490"/>
    </source>
</evidence>
<evidence type="ECO:0000269" key="3">
    <source>
    </source>
</evidence>